<accession>C4LDK0</accession>
<sequence length="401" mass="44290">MVLPKIKEVRAWFTGGATAEKGAGGADYHDQGNHHWIDDHIATPMSKYKQYEQSRQSFGINVLGTLVIEVEADNGQIGFAVSTAGEMGCFIVEKHLNRFIEGKCVSDIKLIHDQMLGATMYYAGSGGLVMNTISCVDLALWDLFGKVVGLPVYKLLGGAVRDEIQFYATGARPDLAKEMGFIGGKMPTHWGPHDGDKGIRKDAAMVAEYREKCGPDFWLMLDCWMSQDVNYATKLAYACAPYNLKWIEECLPPQQYEGYRELKRNAPPGMMVTSGEHHGTLQSFQTLSETGIDIMQPDVGWCGGLTTLVEVAAIAKARGQLVVPHGSSVYSHHAVITFTNTPFSEFLMTSPDCSVLRPQFDPILINEPVPVNGRIHKSVLDKPGFGVELNRDCKLKRPYTH</sequence>
<organism>
    <name type="scientific">Tolumonas auensis (strain DSM 9187 / NBRC 110442 / TA 4)</name>
    <dbReference type="NCBI Taxonomy" id="595494"/>
    <lineage>
        <taxon>Bacteria</taxon>
        <taxon>Pseudomonadati</taxon>
        <taxon>Pseudomonadota</taxon>
        <taxon>Gammaproteobacteria</taxon>
        <taxon>Aeromonadales</taxon>
        <taxon>Aeromonadaceae</taxon>
        <taxon>Tolumonas</taxon>
    </lineage>
</organism>
<reference key="1">
    <citation type="submission" date="2009-05" db="EMBL/GenBank/DDBJ databases">
        <title>Complete sequence of Tolumonas auensis DSM 9187.</title>
        <authorList>
            <consortium name="US DOE Joint Genome Institute"/>
            <person name="Lucas S."/>
            <person name="Copeland A."/>
            <person name="Lapidus A."/>
            <person name="Glavina del Rio T."/>
            <person name="Tice H."/>
            <person name="Bruce D."/>
            <person name="Goodwin L."/>
            <person name="Pitluck S."/>
            <person name="Chertkov O."/>
            <person name="Brettin T."/>
            <person name="Detter J.C."/>
            <person name="Han C."/>
            <person name="Larimer F."/>
            <person name="Land M."/>
            <person name="Hauser L."/>
            <person name="Kyrpides N."/>
            <person name="Mikhailova N."/>
            <person name="Spring S."/>
            <person name="Beller H."/>
        </authorList>
    </citation>
    <scope>NUCLEOTIDE SEQUENCE [LARGE SCALE GENOMIC DNA]</scope>
    <source>
        <strain>DSM 9187 / NBRC 110442 / TA 4</strain>
    </source>
</reference>
<name>RHMD_TOLAT</name>
<keyword id="KW-0456">Lyase</keyword>
<keyword id="KW-0460">Magnesium</keyword>
<keyword id="KW-0479">Metal-binding</keyword>
<keyword id="KW-1185">Reference proteome</keyword>
<gene>
    <name evidence="1" type="primary">rhmD</name>
    <name type="ordered locus">Tola_1175</name>
</gene>
<dbReference type="EC" id="4.2.1.90" evidence="1"/>
<dbReference type="EMBL" id="CP001616">
    <property type="protein sequence ID" value="ACQ92796.1"/>
    <property type="molecule type" value="Genomic_DNA"/>
</dbReference>
<dbReference type="RefSeq" id="WP_012729395.1">
    <property type="nucleotide sequence ID" value="NC_012691.1"/>
</dbReference>
<dbReference type="SMR" id="C4LDK0"/>
<dbReference type="STRING" id="595494.Tola_1175"/>
<dbReference type="KEGG" id="tau:Tola_1175"/>
<dbReference type="eggNOG" id="COG4948">
    <property type="taxonomic scope" value="Bacteria"/>
</dbReference>
<dbReference type="HOGENOM" id="CLU_030273_1_0_6"/>
<dbReference type="OrthoDB" id="103536at2"/>
<dbReference type="Proteomes" id="UP000009073">
    <property type="component" value="Chromosome"/>
</dbReference>
<dbReference type="GO" id="GO:0050032">
    <property type="term" value="F:L-rhamnonate dehydratase activity"/>
    <property type="evidence" value="ECO:0007669"/>
    <property type="project" value="UniProtKB-UniRule"/>
</dbReference>
<dbReference type="GO" id="GO:0000287">
    <property type="term" value="F:magnesium ion binding"/>
    <property type="evidence" value="ECO:0007669"/>
    <property type="project" value="UniProtKB-UniRule"/>
</dbReference>
<dbReference type="GO" id="GO:0009063">
    <property type="term" value="P:amino acid catabolic process"/>
    <property type="evidence" value="ECO:0007669"/>
    <property type="project" value="InterPro"/>
</dbReference>
<dbReference type="GO" id="GO:0016052">
    <property type="term" value="P:carbohydrate catabolic process"/>
    <property type="evidence" value="ECO:0007669"/>
    <property type="project" value="TreeGrafter"/>
</dbReference>
<dbReference type="CDD" id="cd03327">
    <property type="entry name" value="MR_like_2"/>
    <property type="match status" value="1"/>
</dbReference>
<dbReference type="FunFam" id="3.20.20.120:FF:000005">
    <property type="entry name" value="Putative L-rhamnonate dehydratase"/>
    <property type="match status" value="1"/>
</dbReference>
<dbReference type="Gene3D" id="3.20.20.120">
    <property type="entry name" value="Enolase-like C-terminal domain"/>
    <property type="match status" value="1"/>
</dbReference>
<dbReference type="Gene3D" id="3.30.390.10">
    <property type="entry name" value="Enolase-like, N-terminal domain"/>
    <property type="match status" value="1"/>
</dbReference>
<dbReference type="HAMAP" id="MF_01288">
    <property type="entry name" value="Rhamnon_dehydrat"/>
    <property type="match status" value="1"/>
</dbReference>
<dbReference type="InterPro" id="IPR036849">
    <property type="entry name" value="Enolase-like_C_sf"/>
</dbReference>
<dbReference type="InterPro" id="IPR029017">
    <property type="entry name" value="Enolase-like_N"/>
</dbReference>
<dbReference type="InterPro" id="IPR029065">
    <property type="entry name" value="Enolase_C-like"/>
</dbReference>
<dbReference type="InterPro" id="IPR023444">
    <property type="entry name" value="L-Rhamnon_dehydrat"/>
</dbReference>
<dbReference type="InterPro" id="IPR018110">
    <property type="entry name" value="Mandel_Rmase/mucon_lact_enz_CS"/>
</dbReference>
<dbReference type="InterPro" id="IPR013342">
    <property type="entry name" value="Mandelate_racemase_C"/>
</dbReference>
<dbReference type="InterPro" id="IPR013341">
    <property type="entry name" value="Mandelate_racemase_N_dom"/>
</dbReference>
<dbReference type="InterPro" id="IPR046945">
    <property type="entry name" value="RHMD-like"/>
</dbReference>
<dbReference type="NCBIfam" id="NF011968">
    <property type="entry name" value="PRK15440.1"/>
    <property type="match status" value="1"/>
</dbReference>
<dbReference type="PANTHER" id="PTHR13794">
    <property type="entry name" value="ENOLASE SUPERFAMILY, MANDELATE RACEMASE"/>
    <property type="match status" value="1"/>
</dbReference>
<dbReference type="PANTHER" id="PTHR13794:SF58">
    <property type="entry name" value="MITOCHONDRIAL ENOLASE SUPERFAMILY MEMBER 1"/>
    <property type="match status" value="1"/>
</dbReference>
<dbReference type="Pfam" id="PF13378">
    <property type="entry name" value="MR_MLE_C"/>
    <property type="match status" value="1"/>
</dbReference>
<dbReference type="Pfam" id="PF02746">
    <property type="entry name" value="MR_MLE_N"/>
    <property type="match status" value="1"/>
</dbReference>
<dbReference type="SFLD" id="SFLDS00001">
    <property type="entry name" value="Enolase"/>
    <property type="match status" value="1"/>
</dbReference>
<dbReference type="SFLD" id="SFLDF00006">
    <property type="entry name" value="rhamnonate_dehydratase"/>
    <property type="match status" value="1"/>
</dbReference>
<dbReference type="SMART" id="SM00922">
    <property type="entry name" value="MR_MLE"/>
    <property type="match status" value="1"/>
</dbReference>
<dbReference type="SUPFAM" id="SSF51604">
    <property type="entry name" value="Enolase C-terminal domain-like"/>
    <property type="match status" value="1"/>
</dbReference>
<dbReference type="SUPFAM" id="SSF54826">
    <property type="entry name" value="Enolase N-terminal domain-like"/>
    <property type="match status" value="1"/>
</dbReference>
<dbReference type="PROSITE" id="PS00908">
    <property type="entry name" value="MR_MLE_1"/>
    <property type="match status" value="1"/>
</dbReference>
<proteinExistence type="inferred from homology"/>
<protein>
    <recommendedName>
        <fullName evidence="1">L-rhamnonate dehydratase</fullName>
        <shortName evidence="1">RhamD</shortName>
        <ecNumber evidence="1">4.2.1.90</ecNumber>
    </recommendedName>
</protein>
<evidence type="ECO:0000255" key="1">
    <source>
        <dbReference type="HAMAP-Rule" id="MF_01288"/>
    </source>
</evidence>
<feature type="chain" id="PRO_1000214214" description="L-rhamnonate dehydratase">
    <location>
        <begin position="1"/>
        <end position="401"/>
    </location>
</feature>
<feature type="active site" description="Proton acceptor" evidence="1">
    <location>
        <position position="325"/>
    </location>
</feature>
<feature type="binding site" evidence="1">
    <location>
        <position position="29"/>
    </location>
    <ligand>
        <name>substrate</name>
    </ligand>
</feature>
<feature type="binding site" evidence="1">
    <location>
        <position position="55"/>
    </location>
    <ligand>
        <name>substrate</name>
    </ligand>
</feature>
<feature type="binding site" evidence="1">
    <location>
        <position position="222"/>
    </location>
    <ligand>
        <name>Mg(2+)</name>
        <dbReference type="ChEBI" id="CHEBI:18420"/>
    </ligand>
</feature>
<feature type="binding site" evidence="1">
    <location>
        <position position="248"/>
    </location>
    <ligand>
        <name>Mg(2+)</name>
        <dbReference type="ChEBI" id="CHEBI:18420"/>
    </ligand>
</feature>
<feature type="binding site" evidence="1">
    <location>
        <position position="276"/>
    </location>
    <ligand>
        <name>Mg(2+)</name>
        <dbReference type="ChEBI" id="CHEBI:18420"/>
    </ligand>
</feature>
<feature type="binding site" evidence="1">
    <location>
        <position position="345"/>
    </location>
    <ligand>
        <name>substrate</name>
    </ligand>
</feature>
<feature type="site" description="Increases basicity of active site His" evidence="1">
    <location>
        <position position="298"/>
    </location>
</feature>
<feature type="site" description="Transition state stabilizer" evidence="1">
    <location>
        <position position="345"/>
    </location>
</feature>
<comment type="function">
    <text evidence="1">Catalyzes the dehydration of L-rhamnonate to 2-keto-3-deoxy-L-rhamnonate (KDR).</text>
</comment>
<comment type="catalytic activity">
    <reaction evidence="1">
        <text>L-rhamnonate = 2-dehydro-3-deoxy-L-rhamnonate + H2O</text>
        <dbReference type="Rhea" id="RHEA:23080"/>
        <dbReference type="ChEBI" id="CHEBI:15377"/>
        <dbReference type="ChEBI" id="CHEBI:58118"/>
        <dbReference type="ChEBI" id="CHEBI:58371"/>
        <dbReference type="EC" id="4.2.1.90"/>
    </reaction>
</comment>
<comment type="cofactor">
    <cofactor evidence="1">
        <name>Mg(2+)</name>
        <dbReference type="ChEBI" id="CHEBI:18420"/>
    </cofactor>
    <text evidence="1">Binds 1 Mg(2+) ion per subunit.</text>
</comment>
<comment type="subunit">
    <text evidence="1">Homooctamer; tetramer of dimers.</text>
</comment>
<comment type="miscellaneous">
    <text evidence="1">Reaction proceeds via a syn dehydration.</text>
</comment>
<comment type="similarity">
    <text evidence="1">Belongs to the mandelate racemase/muconate lactonizing enzyme family. RhamD subfamily.</text>
</comment>